<accession>A2RDL0</accession>
<sequence length="360" mass="40369">MPKKILFTGGGTVGHVTLNLILIPKFIKDGWEVHYIGDKNGIEHTEIEKSGLDVTFHAIATGKLRRYFSWQNLADVFKVALGLLQSLFIVAKLRPQALFSKGGFVSVPPVVAAKLLGKPVFIHESDRSMGLANKIAYKFATTVYTTFEQEDQLSKVKHLGAVTKVFKDANQIPESTQLEAVKEYFSRDLKTLLFIGGSAGAHVFNQFISDHPELKQRYNIINITGDPHLNELSSHLYRVDYVTDLYQPLMAMADLVVTRGGSNTLFELLAMAKLHLIVPLGKEASRGDQLENATYFEKRGYAKQLQEPDLTLHNFDQAMADLFEHQADYEATMLATKEIQSPDFFYDLLRADISSAIKEK</sequence>
<evidence type="ECO:0000255" key="1">
    <source>
        <dbReference type="HAMAP-Rule" id="MF_00033"/>
    </source>
</evidence>
<protein>
    <recommendedName>
        <fullName evidence="1">UDP-N-acetylglucosamine--N-acetylmuramyl-(pentapeptide) pyrophosphoryl-undecaprenol N-acetylglucosamine transferase</fullName>
        <ecNumber evidence="1">2.4.1.227</ecNumber>
    </recommendedName>
    <alternativeName>
        <fullName evidence="1">Undecaprenyl-PP-MurNAc-pentapeptide-UDPGlcNAc GlcNAc transferase</fullName>
    </alternativeName>
</protein>
<comment type="function">
    <text evidence="1">Cell wall formation. Catalyzes the transfer of a GlcNAc subunit on undecaprenyl-pyrophosphoryl-MurNAc-pentapeptide (lipid intermediate I) to form undecaprenyl-pyrophosphoryl-MurNAc-(pentapeptide)GlcNAc (lipid intermediate II).</text>
</comment>
<comment type="catalytic activity">
    <reaction evidence="1">
        <text>Mur2Ac(oyl-L-Ala-gamma-D-Glu-L-Lys-D-Ala-D-Ala)-di-trans,octa-cis-undecaprenyl diphosphate + UDP-N-acetyl-alpha-D-glucosamine = beta-D-GlcNAc-(1-&gt;4)-Mur2Ac(oyl-L-Ala-gamma-D-Glu-L-Lys-D-Ala-D-Ala)-di-trans,octa-cis-undecaprenyl diphosphate + UDP + H(+)</text>
        <dbReference type="Rhea" id="RHEA:23192"/>
        <dbReference type="ChEBI" id="CHEBI:15378"/>
        <dbReference type="ChEBI" id="CHEBI:57705"/>
        <dbReference type="ChEBI" id="CHEBI:58223"/>
        <dbReference type="ChEBI" id="CHEBI:60032"/>
        <dbReference type="ChEBI" id="CHEBI:60033"/>
        <dbReference type="EC" id="2.4.1.227"/>
    </reaction>
</comment>
<comment type="pathway">
    <text evidence="1">Cell wall biogenesis; peptidoglycan biosynthesis.</text>
</comment>
<comment type="subcellular location">
    <subcellularLocation>
        <location evidence="1">Cell membrane</location>
        <topology evidence="1">Peripheral membrane protein</topology>
        <orientation evidence="1">Cytoplasmic side</orientation>
    </subcellularLocation>
</comment>
<comment type="similarity">
    <text evidence="1">Belongs to the glycosyltransferase 28 family. MurG subfamily.</text>
</comment>
<proteinExistence type="inferred from homology"/>
<dbReference type="EC" id="2.4.1.227" evidence="1"/>
<dbReference type="EMBL" id="AM295007">
    <property type="protein sequence ID" value="CAM29935.1"/>
    <property type="molecule type" value="Genomic_DNA"/>
</dbReference>
<dbReference type="RefSeq" id="WP_011888735.1">
    <property type="nucleotide sequence ID" value="NC_009332.1"/>
</dbReference>
<dbReference type="SMR" id="A2RDL0"/>
<dbReference type="CAZy" id="GT28">
    <property type="family name" value="Glycosyltransferase Family 28"/>
</dbReference>
<dbReference type="KEGG" id="spf:SpyM50600"/>
<dbReference type="HOGENOM" id="CLU_037404_0_0_9"/>
<dbReference type="UniPathway" id="UPA00219"/>
<dbReference type="GO" id="GO:0005886">
    <property type="term" value="C:plasma membrane"/>
    <property type="evidence" value="ECO:0007669"/>
    <property type="project" value="UniProtKB-SubCell"/>
</dbReference>
<dbReference type="GO" id="GO:0050511">
    <property type="term" value="F:undecaprenyldiphospho-muramoylpentapeptide beta-N-acetylglucosaminyltransferase activity"/>
    <property type="evidence" value="ECO:0007669"/>
    <property type="project" value="UniProtKB-UniRule"/>
</dbReference>
<dbReference type="GO" id="GO:0005975">
    <property type="term" value="P:carbohydrate metabolic process"/>
    <property type="evidence" value="ECO:0007669"/>
    <property type="project" value="InterPro"/>
</dbReference>
<dbReference type="GO" id="GO:0051301">
    <property type="term" value="P:cell division"/>
    <property type="evidence" value="ECO:0007669"/>
    <property type="project" value="UniProtKB-KW"/>
</dbReference>
<dbReference type="GO" id="GO:0071555">
    <property type="term" value="P:cell wall organization"/>
    <property type="evidence" value="ECO:0007669"/>
    <property type="project" value="UniProtKB-KW"/>
</dbReference>
<dbReference type="GO" id="GO:0030259">
    <property type="term" value="P:lipid glycosylation"/>
    <property type="evidence" value="ECO:0007669"/>
    <property type="project" value="UniProtKB-UniRule"/>
</dbReference>
<dbReference type="GO" id="GO:0009252">
    <property type="term" value="P:peptidoglycan biosynthetic process"/>
    <property type="evidence" value="ECO:0007669"/>
    <property type="project" value="UniProtKB-UniRule"/>
</dbReference>
<dbReference type="GO" id="GO:0008360">
    <property type="term" value="P:regulation of cell shape"/>
    <property type="evidence" value="ECO:0007669"/>
    <property type="project" value="UniProtKB-KW"/>
</dbReference>
<dbReference type="CDD" id="cd03785">
    <property type="entry name" value="GT28_MurG"/>
    <property type="match status" value="1"/>
</dbReference>
<dbReference type="Gene3D" id="3.40.50.2000">
    <property type="entry name" value="Glycogen Phosphorylase B"/>
    <property type="match status" value="2"/>
</dbReference>
<dbReference type="HAMAP" id="MF_00033">
    <property type="entry name" value="MurG"/>
    <property type="match status" value="1"/>
</dbReference>
<dbReference type="InterPro" id="IPR006009">
    <property type="entry name" value="GlcNAc_MurG"/>
</dbReference>
<dbReference type="InterPro" id="IPR007235">
    <property type="entry name" value="Glyco_trans_28_C"/>
</dbReference>
<dbReference type="InterPro" id="IPR004276">
    <property type="entry name" value="GlycoTrans_28_N"/>
</dbReference>
<dbReference type="PANTHER" id="PTHR21015:SF27">
    <property type="entry name" value="UDP-N-ACETYLGLUCOSAMINE--N-ACETYLMURAMYL-(PENTAPEPTIDE) PYROPHOSPHORYL-UNDECAPRENOL N-ACETYLGLUCOSAMINE TRANSFERASE"/>
    <property type="match status" value="1"/>
</dbReference>
<dbReference type="PANTHER" id="PTHR21015">
    <property type="entry name" value="UDP-N-ACETYLGLUCOSAMINE--N-ACETYLMURAMYL-(PENTAPEPTIDE) PYROPHOSPHORYL-UNDECAPRENOL N-ACETYLGLUCOSAMINE TRANSFERASE 1"/>
    <property type="match status" value="1"/>
</dbReference>
<dbReference type="Pfam" id="PF04101">
    <property type="entry name" value="Glyco_tran_28_C"/>
    <property type="match status" value="1"/>
</dbReference>
<dbReference type="Pfam" id="PF03033">
    <property type="entry name" value="Glyco_transf_28"/>
    <property type="match status" value="1"/>
</dbReference>
<dbReference type="SUPFAM" id="SSF53756">
    <property type="entry name" value="UDP-Glycosyltransferase/glycogen phosphorylase"/>
    <property type="match status" value="1"/>
</dbReference>
<reference key="1">
    <citation type="journal article" date="2007" name="J. Bacteriol.">
        <title>Complete genome of acute rheumatic fever-associated serotype M5 Streptococcus pyogenes strain Manfredo.</title>
        <authorList>
            <person name="Holden M.T.G."/>
            <person name="Scott A."/>
            <person name="Cherevach I."/>
            <person name="Chillingworth T."/>
            <person name="Churcher C."/>
            <person name="Cronin A."/>
            <person name="Dowd L."/>
            <person name="Feltwell T."/>
            <person name="Hamlin N."/>
            <person name="Holroyd S."/>
            <person name="Jagels K."/>
            <person name="Moule S."/>
            <person name="Mungall K."/>
            <person name="Quail M.A."/>
            <person name="Price C."/>
            <person name="Rabbinowitsch E."/>
            <person name="Sharp S."/>
            <person name="Skelton J."/>
            <person name="Whitehead S."/>
            <person name="Barrell B.G."/>
            <person name="Kehoe M."/>
            <person name="Parkhill J."/>
        </authorList>
    </citation>
    <scope>NUCLEOTIDE SEQUENCE [LARGE SCALE GENOMIC DNA]</scope>
    <source>
        <strain>Manfredo</strain>
    </source>
</reference>
<feature type="chain" id="PRO_0000315181" description="UDP-N-acetylglucosamine--N-acetylmuramyl-(pentapeptide) pyrophosphoryl-undecaprenol N-acetylglucosamine transferase">
    <location>
        <begin position="1"/>
        <end position="360"/>
    </location>
</feature>
<feature type="binding site" evidence="1">
    <location>
        <position position="198"/>
    </location>
    <ligand>
        <name>UDP-N-acetyl-alpha-D-glucosamine</name>
        <dbReference type="ChEBI" id="CHEBI:57705"/>
    </ligand>
</feature>
<feature type="binding site" evidence="1">
    <location>
        <position position="289"/>
    </location>
    <ligand>
        <name>UDP-N-acetyl-alpha-D-glucosamine</name>
        <dbReference type="ChEBI" id="CHEBI:57705"/>
    </ligand>
</feature>
<name>MURG_STRPG</name>
<keyword id="KW-0131">Cell cycle</keyword>
<keyword id="KW-0132">Cell division</keyword>
<keyword id="KW-1003">Cell membrane</keyword>
<keyword id="KW-0133">Cell shape</keyword>
<keyword id="KW-0961">Cell wall biogenesis/degradation</keyword>
<keyword id="KW-0328">Glycosyltransferase</keyword>
<keyword id="KW-0472">Membrane</keyword>
<keyword id="KW-0573">Peptidoglycan synthesis</keyword>
<keyword id="KW-0808">Transferase</keyword>
<gene>
    <name evidence="1" type="primary">murG</name>
    <name type="ordered locus">SpyM50600</name>
</gene>
<organism>
    <name type="scientific">Streptococcus pyogenes serotype M5 (strain Manfredo)</name>
    <dbReference type="NCBI Taxonomy" id="160491"/>
    <lineage>
        <taxon>Bacteria</taxon>
        <taxon>Bacillati</taxon>
        <taxon>Bacillota</taxon>
        <taxon>Bacilli</taxon>
        <taxon>Lactobacillales</taxon>
        <taxon>Streptococcaceae</taxon>
        <taxon>Streptococcus</taxon>
    </lineage>
</organism>